<name>Y1172_STAA9</name>
<organism>
    <name type="scientific">Staphylococcus aureus (strain JH9)</name>
    <dbReference type="NCBI Taxonomy" id="359786"/>
    <lineage>
        <taxon>Bacteria</taxon>
        <taxon>Bacillati</taxon>
        <taxon>Bacillota</taxon>
        <taxon>Bacilli</taxon>
        <taxon>Bacillales</taxon>
        <taxon>Staphylococcaceae</taxon>
        <taxon>Staphylococcus</taxon>
    </lineage>
</organism>
<evidence type="ECO:0000255" key="1">
    <source>
        <dbReference type="HAMAP-Rule" id="MF_01560"/>
    </source>
</evidence>
<proteinExistence type="inferred from homology"/>
<accession>A5IRZ9</accession>
<protein>
    <recommendedName>
        <fullName evidence="1">UPF0358 protein SaurJH9_1172</fullName>
    </recommendedName>
</protein>
<sequence>MAKQATMKNAALKQLTKDADEILHLIKVQLDNLTLPSCPLYEEVLDTQMFGLQKEVDFAVKLGLVDREDGKQIMLRLEKELSKLHEAFTLV</sequence>
<feature type="chain" id="PRO_1000087804" description="UPF0358 protein SaurJH9_1172">
    <location>
        <begin position="1"/>
        <end position="91"/>
    </location>
</feature>
<reference key="1">
    <citation type="submission" date="2007-05" db="EMBL/GenBank/DDBJ databases">
        <title>Complete sequence of chromosome of Staphylococcus aureus subsp. aureus JH9.</title>
        <authorList>
            <consortium name="US DOE Joint Genome Institute"/>
            <person name="Copeland A."/>
            <person name="Lucas S."/>
            <person name="Lapidus A."/>
            <person name="Barry K."/>
            <person name="Detter J.C."/>
            <person name="Glavina del Rio T."/>
            <person name="Hammon N."/>
            <person name="Israni S."/>
            <person name="Pitluck S."/>
            <person name="Chain P."/>
            <person name="Malfatti S."/>
            <person name="Shin M."/>
            <person name="Vergez L."/>
            <person name="Schmutz J."/>
            <person name="Larimer F."/>
            <person name="Land M."/>
            <person name="Hauser L."/>
            <person name="Kyrpides N."/>
            <person name="Kim E."/>
            <person name="Tomasz A."/>
            <person name="Richardson P."/>
        </authorList>
    </citation>
    <scope>NUCLEOTIDE SEQUENCE [LARGE SCALE GENOMIC DNA]</scope>
    <source>
        <strain>JH9</strain>
    </source>
</reference>
<dbReference type="EMBL" id="CP000703">
    <property type="protein sequence ID" value="ABQ48972.1"/>
    <property type="molecule type" value="Genomic_DNA"/>
</dbReference>
<dbReference type="RefSeq" id="WP_001118417.1">
    <property type="nucleotide sequence ID" value="NC_009487.1"/>
</dbReference>
<dbReference type="SMR" id="A5IRZ9"/>
<dbReference type="KEGG" id="saj:SaurJH9_1172"/>
<dbReference type="HOGENOM" id="CLU_160493_1_0_9"/>
<dbReference type="Gene3D" id="1.10.287.750">
    <property type="entry name" value="SO2669-like"/>
    <property type="match status" value="1"/>
</dbReference>
<dbReference type="HAMAP" id="MF_01560">
    <property type="entry name" value="UPF0358"/>
    <property type="match status" value="1"/>
</dbReference>
<dbReference type="InterPro" id="IPR009983">
    <property type="entry name" value="UPF0358"/>
</dbReference>
<dbReference type="InterPro" id="IPR036270">
    <property type="entry name" value="UPF0358_sf"/>
</dbReference>
<dbReference type="NCBIfam" id="NF010187">
    <property type="entry name" value="PRK13666.1"/>
    <property type="match status" value="1"/>
</dbReference>
<dbReference type="Pfam" id="PF07408">
    <property type="entry name" value="DUF1507"/>
    <property type="match status" value="1"/>
</dbReference>
<dbReference type="SUPFAM" id="SSF140404">
    <property type="entry name" value="EF2458-like"/>
    <property type="match status" value="1"/>
</dbReference>
<gene>
    <name type="ordered locus">SaurJH9_1172</name>
</gene>
<comment type="similarity">
    <text evidence="1">Belongs to the UPF0358 family.</text>
</comment>